<accession>P0AB85</accession>
<accession>P33943</accession>
<accession>P33944</accession>
<accession>P76455</accession>
<comment type="function">
    <text evidence="1">Flavin transferase that catalyzes the transfer of the FMN moiety of FAD and its covalent binding to the hydroxyl group of a threonine residue in a target flavoprotein such as NqrB and NqrC, two subunits of the NQR complex.</text>
</comment>
<comment type="catalytic activity">
    <reaction evidence="1">
        <text>L-threonyl-[protein] + FAD = FMN-L-threonyl-[protein] + AMP + H(+)</text>
        <dbReference type="Rhea" id="RHEA:36847"/>
        <dbReference type="Rhea" id="RHEA-COMP:11060"/>
        <dbReference type="Rhea" id="RHEA-COMP:11061"/>
        <dbReference type="ChEBI" id="CHEBI:15378"/>
        <dbReference type="ChEBI" id="CHEBI:30013"/>
        <dbReference type="ChEBI" id="CHEBI:57692"/>
        <dbReference type="ChEBI" id="CHEBI:74257"/>
        <dbReference type="ChEBI" id="CHEBI:456215"/>
        <dbReference type="EC" id="2.7.1.180"/>
    </reaction>
</comment>
<comment type="cofactor">
    <cofactor evidence="1">
        <name>Mg(2+)</name>
        <dbReference type="ChEBI" id="CHEBI:18420"/>
    </cofactor>
</comment>
<comment type="subunit">
    <text evidence="4">Homodimer.</text>
</comment>
<comment type="subcellular location">
    <subcellularLocation>
        <location evidence="2 3">Cell inner membrane</location>
        <topology evidence="2 3">Lipid-anchor</topology>
        <orientation evidence="2">Periplasmic side</orientation>
    </subcellularLocation>
</comment>
<comment type="similarity">
    <text evidence="6">Belongs to the ApbE family.</text>
</comment>
<comment type="sequence caution" evidence="6">
    <conflict type="frameshift">
        <sequence resource="EMBL-CDS" id="AAA16404"/>
    </conflict>
    <text>Produces two separate ORFs.</text>
</comment>
<comment type="sequence caution" evidence="6">
    <conflict type="frameshift">
        <sequence resource="EMBL-CDS" id="AAA16405"/>
    </conflict>
</comment>
<evidence type="ECO:0000250" key="1">
    <source>
        <dbReference type="UniProtKB" id="A5F5Y3"/>
    </source>
</evidence>
<evidence type="ECO:0000250" key="2">
    <source>
        <dbReference type="UniProtKB" id="P41780"/>
    </source>
</evidence>
<evidence type="ECO:0000255" key="3">
    <source>
        <dbReference type="PROSITE-ProRule" id="PRU00303"/>
    </source>
</evidence>
<evidence type="ECO:0000269" key="4">
    <source>
    </source>
</evidence>
<evidence type="ECO:0000269" key="5">
    <source ref="6"/>
</evidence>
<evidence type="ECO:0000305" key="6"/>
<evidence type="ECO:0007829" key="7">
    <source>
        <dbReference type="PDB" id="4XGW"/>
    </source>
</evidence>
<name>APBE_ECOLI</name>
<gene>
    <name type="primary">apbE</name>
    <name type="synonym">yojK</name>
    <name type="synonym">yojL</name>
    <name type="ordered locus">b2214</name>
    <name type="ordered locus">JW5368</name>
</gene>
<dbReference type="EC" id="2.7.1.180" evidence="1"/>
<dbReference type="EMBL" id="U00008">
    <property type="protein sequence ID" value="AAA16405.1"/>
    <property type="status" value="ALT_FRAME"/>
    <property type="molecule type" value="Genomic_DNA"/>
</dbReference>
<dbReference type="EMBL" id="U00008">
    <property type="protein sequence ID" value="AAA16404.1"/>
    <property type="status" value="ALT_FRAME"/>
    <property type="molecule type" value="Genomic_DNA"/>
</dbReference>
<dbReference type="EMBL" id="U00096">
    <property type="protein sequence ID" value="AAC75274.1"/>
    <property type="molecule type" value="Genomic_DNA"/>
</dbReference>
<dbReference type="EMBL" id="AP009048">
    <property type="protein sequence ID" value="BAA15997.2"/>
    <property type="molecule type" value="Genomic_DNA"/>
</dbReference>
<dbReference type="PIR" id="D64991">
    <property type="entry name" value="D64991"/>
</dbReference>
<dbReference type="RefSeq" id="NP_416718.1">
    <property type="nucleotide sequence ID" value="NC_000913.3"/>
</dbReference>
<dbReference type="RefSeq" id="WP_000406064.1">
    <property type="nucleotide sequence ID" value="NZ_SSZK01000030.1"/>
</dbReference>
<dbReference type="PDB" id="2O18">
    <property type="method" value="X-ray"/>
    <property type="resolution" value="2.20 A"/>
    <property type="chains" value="A/B/C/D=21-351"/>
</dbReference>
<dbReference type="PDB" id="4XGV">
    <property type="method" value="X-ray"/>
    <property type="resolution" value="1.88 A"/>
    <property type="chains" value="A/B/C/D=21-351"/>
</dbReference>
<dbReference type="PDB" id="4XGW">
    <property type="method" value="X-ray"/>
    <property type="resolution" value="1.75 A"/>
    <property type="chains" value="A/B/C/D=21-351"/>
</dbReference>
<dbReference type="PDB" id="4XGX">
    <property type="method" value="X-ray"/>
    <property type="resolution" value="1.90 A"/>
    <property type="chains" value="A/B=21-351"/>
</dbReference>
<dbReference type="PDBsum" id="2O18"/>
<dbReference type="PDBsum" id="4XGV"/>
<dbReference type="PDBsum" id="4XGW"/>
<dbReference type="PDBsum" id="4XGX"/>
<dbReference type="SMR" id="P0AB85"/>
<dbReference type="BioGRID" id="4261922">
    <property type="interactions" value="69"/>
</dbReference>
<dbReference type="FunCoup" id="P0AB85">
    <property type="interactions" value="107"/>
</dbReference>
<dbReference type="STRING" id="511145.b2214"/>
<dbReference type="jPOST" id="P0AB85"/>
<dbReference type="PaxDb" id="511145-b2214"/>
<dbReference type="EnsemblBacteria" id="AAC75274">
    <property type="protein sequence ID" value="AAC75274"/>
    <property type="gene ID" value="b2214"/>
</dbReference>
<dbReference type="GeneID" id="946711"/>
<dbReference type="KEGG" id="ecj:JW5368"/>
<dbReference type="KEGG" id="eco:b2214"/>
<dbReference type="KEGG" id="ecoc:C3026_12370"/>
<dbReference type="PATRIC" id="fig|1411691.4.peg.21"/>
<dbReference type="EchoBASE" id="EB1998"/>
<dbReference type="eggNOG" id="COG1477">
    <property type="taxonomic scope" value="Bacteria"/>
</dbReference>
<dbReference type="InParanoid" id="P0AB85"/>
<dbReference type="OMA" id="DTQFLMG"/>
<dbReference type="OrthoDB" id="9778595at2"/>
<dbReference type="PhylomeDB" id="P0AB85"/>
<dbReference type="BioCyc" id="EcoCyc:EG12073-MONOMER"/>
<dbReference type="BioCyc" id="MetaCyc:EG12073-MONOMER"/>
<dbReference type="BRENDA" id="2.7.1.180">
    <property type="organism ID" value="2026"/>
</dbReference>
<dbReference type="BRENDA" id="3.6.1.18">
    <property type="organism ID" value="2026"/>
</dbReference>
<dbReference type="EvolutionaryTrace" id="P0AB85"/>
<dbReference type="PRO" id="PR:P0AB85"/>
<dbReference type="Proteomes" id="UP000000625">
    <property type="component" value="Chromosome"/>
</dbReference>
<dbReference type="GO" id="GO:1990204">
    <property type="term" value="C:oxidoreductase complex"/>
    <property type="evidence" value="ECO:0000314"/>
    <property type="project" value="EcoCyc"/>
</dbReference>
<dbReference type="GO" id="GO:0005886">
    <property type="term" value="C:plasma membrane"/>
    <property type="evidence" value="ECO:0007669"/>
    <property type="project" value="UniProtKB-SubCell"/>
</dbReference>
<dbReference type="GO" id="GO:0046872">
    <property type="term" value="F:metal ion binding"/>
    <property type="evidence" value="ECO:0000314"/>
    <property type="project" value="EcoCyc"/>
</dbReference>
<dbReference type="GO" id="GO:0016740">
    <property type="term" value="F:transferase activity"/>
    <property type="evidence" value="ECO:0000314"/>
    <property type="project" value="EcoCyc"/>
</dbReference>
<dbReference type="FunFam" id="3.10.520.10:FF:000001">
    <property type="entry name" value="FAD:protein FMN transferase"/>
    <property type="match status" value="1"/>
</dbReference>
<dbReference type="Gene3D" id="3.10.520.10">
    <property type="entry name" value="ApbE-like domains"/>
    <property type="match status" value="1"/>
</dbReference>
<dbReference type="InterPro" id="IPR024932">
    <property type="entry name" value="ApbE"/>
</dbReference>
<dbReference type="InterPro" id="IPR003374">
    <property type="entry name" value="ApbE-like_sf"/>
</dbReference>
<dbReference type="NCBIfam" id="NF007774">
    <property type="entry name" value="PRK10461.1"/>
    <property type="match status" value="1"/>
</dbReference>
<dbReference type="PANTHER" id="PTHR30040:SF2">
    <property type="entry name" value="FAD:PROTEIN FMN TRANSFERASE"/>
    <property type="match status" value="1"/>
</dbReference>
<dbReference type="PANTHER" id="PTHR30040">
    <property type="entry name" value="THIAMINE BIOSYNTHESIS LIPOPROTEIN APBE"/>
    <property type="match status" value="1"/>
</dbReference>
<dbReference type="Pfam" id="PF02424">
    <property type="entry name" value="ApbE"/>
    <property type="match status" value="1"/>
</dbReference>
<dbReference type="PIRSF" id="PIRSF006268">
    <property type="entry name" value="ApbE"/>
    <property type="match status" value="1"/>
</dbReference>
<dbReference type="SUPFAM" id="SSF143631">
    <property type="entry name" value="ApbE-like"/>
    <property type="match status" value="1"/>
</dbReference>
<dbReference type="PROSITE" id="PS51257">
    <property type="entry name" value="PROKAR_LIPOPROTEIN"/>
    <property type="match status" value="1"/>
</dbReference>
<proteinExistence type="evidence at protein level"/>
<protein>
    <recommendedName>
        <fullName evidence="1">FAD:protein FMN transferase</fullName>
        <ecNumber evidence="1">2.7.1.180</ecNumber>
    </recommendedName>
    <alternativeName>
        <fullName evidence="1">Flavin transferase</fullName>
    </alternativeName>
</protein>
<organism>
    <name type="scientific">Escherichia coli (strain K12)</name>
    <dbReference type="NCBI Taxonomy" id="83333"/>
    <lineage>
        <taxon>Bacteria</taxon>
        <taxon>Pseudomonadati</taxon>
        <taxon>Pseudomonadota</taxon>
        <taxon>Gammaproteobacteria</taxon>
        <taxon>Enterobacterales</taxon>
        <taxon>Enterobacteriaceae</taxon>
        <taxon>Escherichia</taxon>
    </lineage>
</organism>
<sequence>MEISFTRVALLAAALFFVGCDQKPQPAKTHATEVTVLEGKTMGTFWRASIPGIDAKRSAELKEKIQTQLDADDQLLSTYKKDSALMRFNDSQSLSPWPVSEAMADIVTTSLRIGAKTDGAMDITVGPLVNLWGFGPEQQPVQIPSQEQIDAMKAKTGLQHLTVINQSHQQYLQKDLPDLYVDLSTVGEGYAADHLARLMEQEGISRYLVSVGGALNSRGMNGEGLPWRVAIQKPTDKENAVQAVVDINGHGISTSGSYRNYYELDGKRLSHVIDPQTGRPIEHNLVSVTVIAPTALEADAWDTGLMVLGPEKAKEVVRREGLAVYMITKEGDSFKTWMSPQFKSFLVSEKN</sequence>
<reference key="1">
    <citation type="submission" date="1993-10" db="EMBL/GenBank/DDBJ databases">
        <title>Automated multiplex sequencing of the E.coli genome.</title>
        <authorList>
            <person name="Richterich P."/>
            <person name="Lakey N."/>
            <person name="Gryan G."/>
            <person name="Jaehn L."/>
            <person name="Mintz L."/>
            <person name="Robison K."/>
            <person name="Church G.M."/>
        </authorList>
    </citation>
    <scope>NUCLEOTIDE SEQUENCE [LARGE SCALE GENOMIC DNA]</scope>
    <source>
        <strain>K12 / BHB2600</strain>
    </source>
</reference>
<reference key="2">
    <citation type="journal article" date="1996" name="DNA Res.">
        <title>A 460-kb DNA sequence of the Escherichia coli K-12 genome corresponding to the 40.1-50.0 min region on the linkage map.</title>
        <authorList>
            <person name="Itoh T."/>
            <person name="Aiba H."/>
            <person name="Baba T."/>
            <person name="Fujita K."/>
            <person name="Hayashi K."/>
            <person name="Inada T."/>
            <person name="Isono K."/>
            <person name="Kasai H."/>
            <person name="Kimura S."/>
            <person name="Kitakawa M."/>
            <person name="Kitagawa M."/>
            <person name="Makino K."/>
            <person name="Miki T."/>
            <person name="Mizobuchi K."/>
            <person name="Mori H."/>
            <person name="Mori T."/>
            <person name="Motomura K."/>
            <person name="Nakade S."/>
            <person name="Nakamura Y."/>
            <person name="Nashimoto H."/>
            <person name="Nishio Y."/>
            <person name="Oshima T."/>
            <person name="Saito N."/>
            <person name="Sampei G."/>
            <person name="Seki Y."/>
            <person name="Sivasundaram S."/>
            <person name="Tagami H."/>
            <person name="Takeda J."/>
            <person name="Takemoto K."/>
            <person name="Wada C."/>
            <person name="Yamamoto Y."/>
            <person name="Horiuchi T."/>
        </authorList>
    </citation>
    <scope>NUCLEOTIDE SEQUENCE [LARGE SCALE GENOMIC DNA]</scope>
    <source>
        <strain>K12 / W3110 / ATCC 27325 / DSM 5911</strain>
    </source>
</reference>
<reference key="3">
    <citation type="journal article" date="1997" name="Science">
        <title>The complete genome sequence of Escherichia coli K-12.</title>
        <authorList>
            <person name="Blattner F.R."/>
            <person name="Plunkett G. III"/>
            <person name="Bloch C.A."/>
            <person name="Perna N.T."/>
            <person name="Burland V."/>
            <person name="Riley M."/>
            <person name="Collado-Vides J."/>
            <person name="Glasner J.D."/>
            <person name="Rode C.K."/>
            <person name="Mayhew G.F."/>
            <person name="Gregor J."/>
            <person name="Davis N.W."/>
            <person name="Kirkpatrick H.A."/>
            <person name="Goeden M.A."/>
            <person name="Rose D.J."/>
            <person name="Mau B."/>
            <person name="Shao Y."/>
        </authorList>
    </citation>
    <scope>NUCLEOTIDE SEQUENCE [LARGE SCALE GENOMIC DNA]</scope>
    <source>
        <strain>K12 / MG1655 / ATCC 47076</strain>
    </source>
</reference>
<reference key="4">
    <citation type="journal article" date="2006" name="Mol. Syst. Biol.">
        <title>Highly accurate genome sequences of Escherichia coli K-12 strains MG1655 and W3110.</title>
        <authorList>
            <person name="Hayashi K."/>
            <person name="Morooka N."/>
            <person name="Yamamoto Y."/>
            <person name="Fujita K."/>
            <person name="Isono K."/>
            <person name="Choi S."/>
            <person name="Ohtsubo E."/>
            <person name="Baba T."/>
            <person name="Wanner B.L."/>
            <person name="Mori H."/>
            <person name="Horiuchi T."/>
        </authorList>
    </citation>
    <scope>NUCLEOTIDE SEQUENCE [LARGE SCALE GENOMIC DNA]</scope>
    <source>
        <strain>K12 / W3110 / ATCC 27325 / DSM 5911</strain>
    </source>
</reference>
<reference key="5">
    <citation type="journal article" date="2013" name="J. Biol. Chem.">
        <title>The TP0796 lipoprotein of Treponema pallidum is a bimetal-dependent FAD pyrophosphatase with a potential role in flavin homeostasis.</title>
        <authorList>
            <person name="Deka R.K."/>
            <person name="Brautigam C.A."/>
            <person name="Liu W.Z."/>
            <person name="Tomchick D.R."/>
            <person name="Norgard M.V."/>
        </authorList>
    </citation>
    <scope>SUBUNIT</scope>
</reference>
<reference key="6">
    <citation type="submission" date="2006-11" db="PDB data bank">
        <title>Crystal structure of a thiamine biosynthesis lipoprotein ApbE.</title>
        <authorList>
            <consortium name="Northeast structural genomics consortium (NESG)"/>
        </authorList>
    </citation>
    <scope>X-RAY CRYSTALLOGRAPHY (2.20 ANGSTROMS) OF 21-351 IN COMPLEX WITH CALCIUM</scope>
</reference>
<keyword id="KW-0002">3D-structure</keyword>
<keyword id="KW-0997">Cell inner membrane</keyword>
<keyword id="KW-1003">Cell membrane</keyword>
<keyword id="KW-0274">FAD</keyword>
<keyword id="KW-0285">Flavoprotein</keyword>
<keyword id="KW-0449">Lipoprotein</keyword>
<keyword id="KW-0460">Magnesium</keyword>
<keyword id="KW-0472">Membrane</keyword>
<keyword id="KW-0479">Metal-binding</keyword>
<keyword id="KW-0564">Palmitate</keyword>
<keyword id="KW-1185">Reference proteome</keyword>
<keyword id="KW-0732">Signal</keyword>
<keyword id="KW-0808">Transferase</keyword>
<feature type="signal peptide" evidence="3">
    <location>
        <begin position="1"/>
        <end position="19"/>
    </location>
</feature>
<feature type="chain" id="PRO_0000001748" description="FAD:protein FMN transferase">
    <location>
        <begin position="20"/>
        <end position="351"/>
    </location>
</feature>
<feature type="binding site" evidence="2">
    <location>
        <position position="42"/>
    </location>
    <ligand>
        <name>FAD</name>
        <dbReference type="ChEBI" id="CHEBI:57692"/>
    </ligand>
</feature>
<feature type="binding site" evidence="2">
    <location>
        <position position="79"/>
    </location>
    <ligand>
        <name>FAD</name>
        <dbReference type="ChEBI" id="CHEBI:57692"/>
    </ligand>
</feature>
<feature type="binding site" evidence="2">
    <location>
        <begin position="120"/>
        <end position="122"/>
    </location>
    <ligand>
        <name>FAD</name>
        <dbReference type="ChEBI" id="CHEBI:57692"/>
    </ligand>
</feature>
<feature type="binding site" evidence="2">
    <location>
        <position position="182"/>
    </location>
    <ligand>
        <name>FAD</name>
        <dbReference type="ChEBI" id="CHEBI:57692"/>
    </ligand>
</feature>
<feature type="binding site" evidence="5 6">
    <location>
        <position position="185"/>
    </location>
    <ligand>
        <name>Mg(2+)</name>
        <dbReference type="ChEBI" id="CHEBI:18420"/>
    </ligand>
</feature>
<feature type="binding site" evidence="2">
    <location>
        <position position="188"/>
    </location>
    <ligand>
        <name>FAD</name>
        <dbReference type="ChEBI" id="CHEBI:57692"/>
    </ligand>
</feature>
<feature type="binding site" evidence="2">
    <location>
        <position position="273"/>
    </location>
    <ligand>
        <name>FAD</name>
        <dbReference type="ChEBI" id="CHEBI:57692"/>
    </ligand>
</feature>
<feature type="binding site" evidence="5 6">
    <location>
        <position position="299"/>
    </location>
    <ligand>
        <name>Mg(2+)</name>
        <dbReference type="ChEBI" id="CHEBI:18420"/>
    </ligand>
</feature>
<feature type="binding site" evidence="5 6">
    <location>
        <position position="302"/>
    </location>
    <ligand>
        <name>Mg(2+)</name>
        <dbReference type="ChEBI" id="CHEBI:18420"/>
    </ligand>
</feature>
<feature type="binding site" evidence="5 6">
    <location>
        <position position="303"/>
    </location>
    <ligand>
        <name>Mg(2+)</name>
        <dbReference type="ChEBI" id="CHEBI:18420"/>
    </ligand>
</feature>
<feature type="lipid moiety-binding region" description="N-palmitoyl cysteine" evidence="3">
    <location>
        <position position="20"/>
    </location>
</feature>
<feature type="lipid moiety-binding region" description="S-diacylglycerol cysteine" evidence="3">
    <location>
        <position position="20"/>
    </location>
</feature>
<feature type="strand" evidence="7">
    <location>
        <begin position="34"/>
        <end position="41"/>
    </location>
</feature>
<feature type="strand" evidence="7">
    <location>
        <begin position="44"/>
        <end position="52"/>
    </location>
</feature>
<feature type="helix" evidence="7">
    <location>
        <begin position="55"/>
        <end position="76"/>
    </location>
</feature>
<feature type="strand" evidence="7">
    <location>
        <begin position="78"/>
        <end position="80"/>
    </location>
</feature>
<feature type="helix" evidence="7">
    <location>
        <begin position="84"/>
        <end position="90"/>
    </location>
</feature>
<feature type="strand" evidence="7">
    <location>
        <begin position="97"/>
        <end position="99"/>
    </location>
</feature>
<feature type="helix" evidence="7">
    <location>
        <begin position="101"/>
        <end position="116"/>
    </location>
</feature>
<feature type="turn" evidence="7">
    <location>
        <begin position="117"/>
        <end position="119"/>
    </location>
</feature>
<feature type="helix" evidence="7">
    <location>
        <begin position="126"/>
        <end position="132"/>
    </location>
</feature>
<feature type="helix" evidence="7">
    <location>
        <begin position="146"/>
        <end position="153"/>
    </location>
</feature>
<feature type="helix" evidence="7">
    <location>
        <begin position="158"/>
        <end position="160"/>
    </location>
</feature>
<feature type="strand" evidence="7">
    <location>
        <begin position="161"/>
        <end position="165"/>
    </location>
</feature>
<feature type="strand" evidence="7">
    <location>
        <begin position="170"/>
        <end position="176"/>
    </location>
</feature>
<feature type="turn" evidence="7">
    <location>
        <begin position="184"/>
        <end position="186"/>
    </location>
</feature>
<feature type="helix" evidence="7">
    <location>
        <begin position="187"/>
        <end position="201"/>
    </location>
</feature>
<feature type="strand" evidence="7">
    <location>
        <begin position="206"/>
        <end position="211"/>
    </location>
</feature>
<feature type="strand" evidence="7">
    <location>
        <begin position="214"/>
        <end position="220"/>
    </location>
</feature>
<feature type="strand" evidence="7">
    <location>
        <begin position="224"/>
        <end position="226"/>
    </location>
</feature>
<feature type="strand" evidence="7">
    <location>
        <begin position="229"/>
        <end position="231"/>
    </location>
</feature>
<feature type="strand" evidence="7">
    <location>
        <begin position="243"/>
        <end position="245"/>
    </location>
</feature>
<feature type="strand" evidence="7">
    <location>
        <begin position="251"/>
        <end position="256"/>
    </location>
</feature>
<feature type="turn" evidence="7">
    <location>
        <begin position="259"/>
        <end position="262"/>
    </location>
</feature>
<feature type="turn" evidence="7">
    <location>
        <begin position="275"/>
        <end position="277"/>
    </location>
</feature>
<feature type="strand" evidence="7">
    <location>
        <begin position="278"/>
        <end position="280"/>
    </location>
</feature>
<feature type="strand" evidence="7">
    <location>
        <begin position="285"/>
        <end position="294"/>
    </location>
</feature>
<feature type="helix" evidence="7">
    <location>
        <begin position="295"/>
        <end position="308"/>
    </location>
</feature>
<feature type="helix" evidence="7">
    <location>
        <begin position="310"/>
        <end position="320"/>
    </location>
</feature>
<feature type="strand" evidence="7">
    <location>
        <begin position="323"/>
        <end position="329"/>
    </location>
</feature>
<feature type="strand" evidence="7">
    <location>
        <begin position="334"/>
        <end position="338"/>
    </location>
</feature>
<feature type="helix" evidence="7">
    <location>
        <begin position="340"/>
        <end position="343"/>
    </location>
</feature>